<protein>
    <recommendedName>
        <fullName>Major prion protein</fullName>
        <shortName>PrP</shortName>
    </recommendedName>
    <alternativeName>
        <fullName>PrP27-30</fullName>
    </alternativeName>
    <alternativeName>
        <fullName>PrP33-35C</fullName>
    </alternativeName>
    <cdAntigenName>CD230</cdAntigenName>
</protein>
<sequence length="252" mass="27639">MANLGCWMLFLFVATWSDLGLCKKRPKPGGWNTGGSRYPGQGSPGGNRYPPQGGGWGQPHGGGWGQPHGGGWGQPHGGGWGQPHGGGWGQGGGTHSQWNKPSKPKTNMKHVAGAAAAGAVVGGLGGYMLGSAMSRPLIHFGNDYEDRYYRENMYRYPNQVYYRPVDQYNNQNNFVHDCVNITIKQHTVTTTTKGENFTETDVKMMERVVEQMCITQYEKESQAYYQRGSSMVLFSSPPVILLISFLIFLIVG</sequence>
<proteinExistence type="inferred from homology"/>
<name>PRIO_CALJA</name>
<feature type="signal peptide" evidence="1">
    <location>
        <begin position="1"/>
        <end position="22"/>
    </location>
</feature>
<feature type="chain" id="PRO_0000025635" description="Major prion protein">
    <location>
        <begin position="23"/>
        <end position="229"/>
    </location>
</feature>
<feature type="propeptide" id="PRO_0000025636" description="Removed in mature form" evidence="1">
    <location>
        <begin position="230"/>
        <end position="252"/>
    </location>
</feature>
<feature type="repeat" description="1">
    <location>
        <begin position="51"/>
        <end position="58"/>
    </location>
</feature>
<feature type="repeat" description="2">
    <location>
        <begin position="59"/>
        <end position="66"/>
    </location>
</feature>
<feature type="repeat" description="3">
    <location>
        <begin position="67"/>
        <end position="74"/>
    </location>
</feature>
<feature type="repeat" description="4">
    <location>
        <begin position="75"/>
        <end position="82"/>
    </location>
</feature>
<feature type="repeat" description="5">
    <location>
        <begin position="83"/>
        <end position="90"/>
    </location>
</feature>
<feature type="region of interest" description="Interaction with GRB2, ERI3 and SYN1" evidence="4">
    <location>
        <begin position="23"/>
        <end position="229"/>
    </location>
</feature>
<feature type="region of interest" description="Interaction with ADGRG6" evidence="4">
    <location>
        <begin position="23"/>
        <end position="38"/>
    </location>
</feature>
<feature type="region of interest" description="Disordered" evidence="6">
    <location>
        <begin position="26"/>
        <end position="106"/>
    </location>
</feature>
<feature type="region of interest" description="5 X 8 AA tandem repeats of P-H-G-G-G-W-G-Q">
    <location>
        <begin position="51"/>
        <end position="90"/>
    </location>
</feature>
<feature type="compositionally biased region" description="Gly residues" evidence="6">
    <location>
        <begin position="52"/>
        <end position="94"/>
    </location>
</feature>
<feature type="binding site" evidence="2">
    <location>
        <position position="60"/>
    </location>
    <ligand>
        <name>Cu(2+)</name>
        <dbReference type="ChEBI" id="CHEBI:29036"/>
        <label>1</label>
    </ligand>
</feature>
<feature type="binding site" evidence="2">
    <location>
        <position position="61"/>
    </location>
    <ligand>
        <name>Cu(2+)</name>
        <dbReference type="ChEBI" id="CHEBI:29036"/>
        <label>1</label>
    </ligand>
</feature>
<feature type="binding site" evidence="2">
    <location>
        <position position="62"/>
    </location>
    <ligand>
        <name>Cu(2+)</name>
        <dbReference type="ChEBI" id="CHEBI:29036"/>
        <label>1</label>
    </ligand>
</feature>
<feature type="binding site" evidence="2">
    <location>
        <position position="68"/>
    </location>
    <ligand>
        <name>Cu(2+)</name>
        <dbReference type="ChEBI" id="CHEBI:29036"/>
        <label>2</label>
    </ligand>
</feature>
<feature type="binding site" evidence="2">
    <location>
        <position position="69"/>
    </location>
    <ligand>
        <name>Cu(2+)</name>
        <dbReference type="ChEBI" id="CHEBI:29036"/>
        <label>2</label>
    </ligand>
</feature>
<feature type="binding site" evidence="2">
    <location>
        <position position="70"/>
    </location>
    <ligand>
        <name>Cu(2+)</name>
        <dbReference type="ChEBI" id="CHEBI:29036"/>
        <label>2</label>
    </ligand>
</feature>
<feature type="binding site" evidence="2">
    <location>
        <position position="76"/>
    </location>
    <ligand>
        <name>Cu(2+)</name>
        <dbReference type="ChEBI" id="CHEBI:29036"/>
        <label>3</label>
    </ligand>
</feature>
<feature type="binding site" evidence="2">
    <location>
        <position position="77"/>
    </location>
    <ligand>
        <name>Cu(2+)</name>
        <dbReference type="ChEBI" id="CHEBI:29036"/>
        <label>3</label>
    </ligand>
</feature>
<feature type="binding site" evidence="2">
    <location>
        <position position="78"/>
    </location>
    <ligand>
        <name>Cu(2+)</name>
        <dbReference type="ChEBI" id="CHEBI:29036"/>
        <label>3</label>
    </ligand>
</feature>
<feature type="binding site" evidence="2">
    <location>
        <position position="84"/>
    </location>
    <ligand>
        <name>Cu(2+)</name>
        <dbReference type="ChEBI" id="CHEBI:29036"/>
        <label>4</label>
    </ligand>
</feature>
<feature type="binding site" evidence="2">
    <location>
        <position position="85"/>
    </location>
    <ligand>
        <name>Cu(2+)</name>
        <dbReference type="ChEBI" id="CHEBI:29036"/>
        <label>4</label>
    </ligand>
</feature>
<feature type="binding site" evidence="2">
    <location>
        <position position="86"/>
    </location>
    <ligand>
        <name>Cu(2+)</name>
        <dbReference type="ChEBI" id="CHEBI:29036"/>
        <label>4</label>
    </ligand>
</feature>
<feature type="lipid moiety-binding region" description="GPI-anchor amidated serine" evidence="3">
    <location>
        <position position="229"/>
    </location>
</feature>
<feature type="glycosylation site" description="N-linked (GlcNAc...) asparagine" evidence="5">
    <location>
        <position position="180"/>
    </location>
</feature>
<feature type="glycosylation site" description="N-linked (GlcNAc...) asparagine" evidence="5">
    <location>
        <position position="196"/>
    </location>
</feature>
<feature type="disulfide bond" evidence="3">
    <location>
        <begin position="178"/>
        <end position="213"/>
    </location>
</feature>
<reference key="1">
    <citation type="journal article" date="1995" name="J. Mol. Biol.">
        <title>Prion protein gene variation among primates.</title>
        <authorList>
            <person name="Schaetzl H.M."/>
            <person name="Da Costa M."/>
            <person name="Taylor L."/>
            <person name="Cohen F.E."/>
            <person name="Prusiner S.B."/>
        </authorList>
    </citation>
    <scope>NUCLEOTIDE SEQUENCE [GENOMIC DNA]</scope>
</reference>
<gene>
    <name type="primary">PRNP</name>
    <name type="synonym">PRP</name>
</gene>
<keyword id="KW-0034">Amyloid</keyword>
<keyword id="KW-1003">Cell membrane</keyword>
<keyword id="KW-0186">Copper</keyword>
<keyword id="KW-1015">Disulfide bond</keyword>
<keyword id="KW-0325">Glycoprotein</keyword>
<keyword id="KW-0333">Golgi apparatus</keyword>
<keyword id="KW-0336">GPI-anchor</keyword>
<keyword id="KW-0449">Lipoprotein</keyword>
<keyword id="KW-0472">Membrane</keyword>
<keyword id="KW-0479">Metal-binding</keyword>
<keyword id="KW-0640">Prion</keyword>
<keyword id="KW-1185">Reference proteome</keyword>
<keyword id="KW-0677">Repeat</keyword>
<keyword id="KW-0732">Signal</keyword>
<keyword id="KW-0862">Zinc</keyword>
<accession>P40247</accession>
<organism>
    <name type="scientific">Callithrix jacchus</name>
    <name type="common">White-tufted-ear marmoset</name>
    <dbReference type="NCBI Taxonomy" id="9483"/>
    <lineage>
        <taxon>Eukaryota</taxon>
        <taxon>Metazoa</taxon>
        <taxon>Chordata</taxon>
        <taxon>Craniata</taxon>
        <taxon>Vertebrata</taxon>
        <taxon>Euteleostomi</taxon>
        <taxon>Mammalia</taxon>
        <taxon>Eutheria</taxon>
        <taxon>Euarchontoglires</taxon>
        <taxon>Primates</taxon>
        <taxon>Haplorrhini</taxon>
        <taxon>Platyrrhini</taxon>
        <taxon>Cebidae</taxon>
        <taxon>Callitrichinae</taxon>
        <taxon>Callithrix</taxon>
        <taxon>Callithrix</taxon>
    </lineage>
</organism>
<comment type="function">
    <text evidence="2 4">Its primary physiological function is unclear. May play a role in neuronal development and synaptic plasticity. May be required for neuronal myelin sheath maintenance. May promote myelin homeostasis through acting as an agonist for ADGRG6 receptor. May play a role in iron uptake and iron homeostasis. Soluble oligomers are toxic to cultured neuroblastoma cells and induce apoptosis (in vitro) (By similarity). Association with GPC1 (via its heparan sulfate chains) targets PRNP to lipid rafts. Also provides Cu(2+) or Zn(2+) for the ascorbate-mediated GPC1 deaminase degradation of its heparan sulfate side chains (By similarity).</text>
</comment>
<comment type="subunit">
    <text evidence="2 4">Monomer and homodimer. Has a tendency to aggregate into amyloid fibrils containing a cross-beta spine, formed by a steric zipper of superposed beta-strands. Soluble oligomers may represent an intermediate stage on the path to fibril formation. Copper binding may promote oligomerization. Interacts with GRB2, APP, ERI3/PRNPIP and SYN1 (By similarity). Mislocalized cytosolically exposed PrP interacts with MGRN1; this interaction alters MGRN1 subcellular location and causes lysosomal enlargement (By similarity). Interacts with APP. Interacts with KIAA1191 (By similarity). Interacts with ADGRG6 (By similarity).</text>
</comment>
<comment type="subcellular location">
    <subcellularLocation>
        <location evidence="2">Cell membrane</location>
        <topology evidence="2">Lipid-anchor</topology>
        <topology evidence="2">GPI-anchor</topology>
    </subcellularLocation>
    <subcellularLocation>
        <location evidence="4">Golgi apparatus</location>
    </subcellularLocation>
    <text evidence="2">Targeted to lipid rafts via association with the heparan sulfate chains of GPC1. Colocates, in the presence of Cu(2+), to vesicles in para- and perinuclear regions, where both proteins undergo internalization. Heparin displaces PRNP from lipid rafts and promotes endocytosis.</text>
</comment>
<comment type="domain">
    <text evidence="2">The normal, monomeric form has a mainly alpha-helical structure. The disease-associated, protease-resistant form forms amyloid fibrils containing a cross-beta spine, formed by a steric zipper of superposed beta-strands. Disease mutations may favor intermolecular contacts via short beta strands, and may thereby trigger oligomerization.</text>
</comment>
<comment type="domain">
    <text evidence="2">Contains an N-terminal region composed of octamer repeats. At low copper concentrations, the sidechains of His residues from three or four repeats contribute to the binding of a single copper ion. Alternatively, a copper ion can be bound by interaction with the sidechain and backbone amide nitrogen of a single His residue. The observed copper binding stoichiometry suggests that two repeat regions cooperate to stabilize the binding of a single copper ion. At higher copper concentrations, each octamer can bind one copper ion by interactions with the His sidechain and Gly backbone atoms. A mixture of binding types may occur, especially in the case of octamer repeat expansion. Copper binding may stabilize the conformation of this region and may promote oligomerization.</text>
</comment>
<comment type="disease">
    <text evidence="7">PrP is found in high quantity in the brain of humans and animals infected with the degenerative neurological diseases kuru, Creutzfeldt-Jakob disease (CJD), Gerstmann-Straussler syndrome (GSS), scrapie, bovine spongiform encephalopathy (BSE), transmissible mink encephalopathy (TME), etc.</text>
</comment>
<comment type="similarity">
    <text evidence="7">Belongs to the prion family.</text>
</comment>
<dbReference type="EMBL" id="U08304">
    <property type="protein sequence ID" value="AAC50092.1"/>
    <property type="molecule type" value="Genomic_DNA"/>
</dbReference>
<dbReference type="PIR" id="S53634">
    <property type="entry name" value="S53634"/>
</dbReference>
<dbReference type="BMRB" id="P40247"/>
<dbReference type="SMR" id="P40247"/>
<dbReference type="FunCoup" id="P40247">
    <property type="interactions" value="491"/>
</dbReference>
<dbReference type="STRING" id="9483.ENSCJAP00000062080"/>
<dbReference type="GlyCosmos" id="P40247">
    <property type="glycosylation" value="2 sites, No reported glycans"/>
</dbReference>
<dbReference type="eggNOG" id="ENOG502S2A8">
    <property type="taxonomic scope" value="Eukaryota"/>
</dbReference>
<dbReference type="InParanoid" id="P40247"/>
<dbReference type="Proteomes" id="UP000008225">
    <property type="component" value="Unplaced"/>
</dbReference>
<dbReference type="GO" id="GO:0005794">
    <property type="term" value="C:Golgi apparatus"/>
    <property type="evidence" value="ECO:0007669"/>
    <property type="project" value="UniProtKB-SubCell"/>
</dbReference>
<dbReference type="GO" id="GO:0005886">
    <property type="term" value="C:plasma membrane"/>
    <property type="evidence" value="ECO:0007669"/>
    <property type="project" value="UniProtKB-SubCell"/>
</dbReference>
<dbReference type="GO" id="GO:0098552">
    <property type="term" value="C:side of membrane"/>
    <property type="evidence" value="ECO:0007669"/>
    <property type="project" value="UniProtKB-KW"/>
</dbReference>
<dbReference type="GO" id="GO:0005507">
    <property type="term" value="F:copper ion binding"/>
    <property type="evidence" value="ECO:0000250"/>
    <property type="project" value="UniProtKB"/>
</dbReference>
<dbReference type="GO" id="GO:0051260">
    <property type="term" value="P:protein homooligomerization"/>
    <property type="evidence" value="ECO:0007669"/>
    <property type="project" value="InterPro"/>
</dbReference>
<dbReference type="FunFam" id="1.10.790.10:FF:000001">
    <property type="entry name" value="Major prion protein"/>
    <property type="match status" value="1"/>
</dbReference>
<dbReference type="Gene3D" id="1.10.790.10">
    <property type="entry name" value="Prion/Doppel protein, beta-ribbon domain"/>
    <property type="match status" value="1"/>
</dbReference>
<dbReference type="InterPro" id="IPR000817">
    <property type="entry name" value="Prion"/>
</dbReference>
<dbReference type="InterPro" id="IPR036924">
    <property type="entry name" value="Prion/Doppel_b-ribbon_dom_sf"/>
</dbReference>
<dbReference type="InterPro" id="IPR022416">
    <property type="entry name" value="Prion/Doppel_prot_b-ribbon_dom"/>
</dbReference>
<dbReference type="InterPro" id="IPR020949">
    <property type="entry name" value="Prion_copper_b_octapeptide"/>
</dbReference>
<dbReference type="InterPro" id="IPR025860">
    <property type="entry name" value="Prion_N"/>
</dbReference>
<dbReference type="PANTHER" id="PTHR15506">
    <property type="entry name" value="DOPPEL PRION"/>
    <property type="match status" value="1"/>
</dbReference>
<dbReference type="PANTHER" id="PTHR15506:SF2">
    <property type="entry name" value="MAJOR PRION PROTEIN"/>
    <property type="match status" value="1"/>
</dbReference>
<dbReference type="Pfam" id="PF00377">
    <property type="entry name" value="Prion"/>
    <property type="match status" value="1"/>
</dbReference>
<dbReference type="Pfam" id="PF11587">
    <property type="entry name" value="Prion_bPrPp"/>
    <property type="match status" value="1"/>
</dbReference>
<dbReference type="Pfam" id="PF03991">
    <property type="entry name" value="Prion_octapep"/>
    <property type="match status" value="1"/>
</dbReference>
<dbReference type="PRINTS" id="PR00341">
    <property type="entry name" value="PRION"/>
</dbReference>
<dbReference type="SMART" id="SM00157">
    <property type="entry name" value="PRP"/>
    <property type="match status" value="1"/>
</dbReference>
<dbReference type="SUPFAM" id="SSF54098">
    <property type="entry name" value="Prion-like"/>
    <property type="match status" value="1"/>
</dbReference>
<dbReference type="PROSITE" id="PS00291">
    <property type="entry name" value="PRION_1"/>
    <property type="match status" value="1"/>
</dbReference>
<dbReference type="PROSITE" id="PS00706">
    <property type="entry name" value="PRION_2"/>
    <property type="match status" value="1"/>
</dbReference>
<evidence type="ECO:0000250" key="1"/>
<evidence type="ECO:0000250" key="2">
    <source>
        <dbReference type="UniProtKB" id="P04156"/>
    </source>
</evidence>
<evidence type="ECO:0000250" key="3">
    <source>
        <dbReference type="UniProtKB" id="P04273"/>
    </source>
</evidence>
<evidence type="ECO:0000250" key="4">
    <source>
        <dbReference type="UniProtKB" id="P04925"/>
    </source>
</evidence>
<evidence type="ECO:0000255" key="5"/>
<evidence type="ECO:0000256" key="6">
    <source>
        <dbReference type="SAM" id="MobiDB-lite"/>
    </source>
</evidence>
<evidence type="ECO:0000305" key="7"/>